<protein>
    <recommendedName>
        <fullName evidence="1">Bifunctional protein HldE</fullName>
    </recommendedName>
    <domain>
        <recommendedName>
            <fullName evidence="1">D-beta-D-heptose 7-phosphate kinase</fullName>
            <ecNumber evidence="1">2.7.1.167</ecNumber>
        </recommendedName>
        <alternativeName>
            <fullName evidence="1">D-beta-D-heptose 7-phosphotransferase</fullName>
        </alternativeName>
        <alternativeName>
            <fullName evidence="1">D-glycero-beta-D-manno-heptose-7-phosphate kinase</fullName>
        </alternativeName>
    </domain>
    <domain>
        <recommendedName>
            <fullName evidence="1">D-beta-D-heptose 1-phosphate adenylyltransferase</fullName>
            <ecNumber evidence="1">2.7.7.70</ecNumber>
        </recommendedName>
        <alternativeName>
            <fullName evidence="1">D-glycero-beta-D-manno-heptose 1-phosphate adenylyltransferase</fullName>
        </alternativeName>
    </domain>
</protein>
<comment type="function">
    <text evidence="1">Catalyzes the phosphorylation of D-glycero-D-manno-heptose 7-phosphate at the C-1 position to selectively form D-glycero-beta-D-manno-heptose-1,7-bisphosphate.</text>
</comment>
<comment type="function">
    <text evidence="1">Catalyzes the ADP transfer from ATP to D-glycero-beta-D-manno-heptose 1-phosphate, yielding ADP-D-glycero-beta-D-manno-heptose.</text>
</comment>
<comment type="catalytic activity">
    <reaction evidence="1">
        <text>D-glycero-beta-D-manno-heptose 7-phosphate + ATP = D-glycero-beta-D-manno-heptose 1,7-bisphosphate + ADP + H(+)</text>
        <dbReference type="Rhea" id="RHEA:27473"/>
        <dbReference type="ChEBI" id="CHEBI:15378"/>
        <dbReference type="ChEBI" id="CHEBI:30616"/>
        <dbReference type="ChEBI" id="CHEBI:60204"/>
        <dbReference type="ChEBI" id="CHEBI:60208"/>
        <dbReference type="ChEBI" id="CHEBI:456216"/>
        <dbReference type="EC" id="2.7.1.167"/>
    </reaction>
</comment>
<comment type="catalytic activity">
    <reaction evidence="1">
        <text>D-glycero-beta-D-manno-heptose 1-phosphate + ATP + H(+) = ADP-D-glycero-beta-D-manno-heptose + diphosphate</text>
        <dbReference type="Rhea" id="RHEA:27465"/>
        <dbReference type="ChEBI" id="CHEBI:15378"/>
        <dbReference type="ChEBI" id="CHEBI:30616"/>
        <dbReference type="ChEBI" id="CHEBI:33019"/>
        <dbReference type="ChEBI" id="CHEBI:59967"/>
        <dbReference type="ChEBI" id="CHEBI:61593"/>
        <dbReference type="EC" id="2.7.7.70"/>
    </reaction>
</comment>
<comment type="pathway">
    <text evidence="1">Nucleotide-sugar biosynthesis; ADP-L-glycero-beta-D-manno-heptose biosynthesis; ADP-L-glycero-beta-D-manno-heptose from D-glycero-beta-D-manno-heptose 7-phosphate: step 1/4.</text>
</comment>
<comment type="pathway">
    <text evidence="1">Nucleotide-sugar biosynthesis; ADP-L-glycero-beta-D-manno-heptose biosynthesis; ADP-L-glycero-beta-D-manno-heptose from D-glycero-beta-D-manno-heptose 7-phosphate: step 3/4.</text>
</comment>
<comment type="subunit">
    <text evidence="1">Homodimer.</text>
</comment>
<comment type="similarity">
    <text evidence="1">In the N-terminal section; belongs to the carbohydrate kinase PfkB family.</text>
</comment>
<comment type="similarity">
    <text evidence="1">In the C-terminal section; belongs to the cytidylyltransferase family.</text>
</comment>
<proteinExistence type="inferred from homology"/>
<keyword id="KW-0067">ATP-binding</keyword>
<keyword id="KW-0119">Carbohydrate metabolism</keyword>
<keyword id="KW-0418">Kinase</keyword>
<keyword id="KW-0511">Multifunctional enzyme</keyword>
<keyword id="KW-0547">Nucleotide-binding</keyword>
<keyword id="KW-0548">Nucleotidyltransferase</keyword>
<keyword id="KW-1185">Reference proteome</keyword>
<keyword id="KW-0808">Transferase</keyword>
<evidence type="ECO:0000255" key="1">
    <source>
        <dbReference type="HAMAP-Rule" id="MF_01603"/>
    </source>
</evidence>
<gene>
    <name evidence="1" type="primary">hldE</name>
    <name type="ordered locus">Acid345_3810</name>
</gene>
<sequence length="486" mass="52439">MSTNVADLLHTIKNNWCDRSILVVGDVMLDQYIWGDVGRISPEAPVPIVRATHRTEQPGGAANVALNIARLGARATIVGFTGTDDNERALKDYLSSNRVEADFVSCEGFPTITKLRILSGRQQMLRLDNERAESRPSTAYQKLIERALHHLPQSDALILSDYAKGVLLPEVCQTLIQAAAQRKIPVLVDPKNVDFSRYRGATTISPNLGELALAARVDLENLNDLLYAAQQMVRNLGLSFLTATLGEKGIALVTRDKTTISAAVARQVFDVSGAGDAVIATLSLSLASGLDPELGVHLANLAGAIVVSKVGTAPVEQYELLNALTAESVPVAQAKVVTRSELLELVARWRRNDERIVVTNGCFDLLHVGHISLLEQARGFGDRLVVAINSDRSVRELKGNSRPIVGEQERARVLAAIAAVDAVVIFDERTPLELIEATRPDVLVKGGDYAVSGVVGAEEVQSWGGHVKIVPIVEGFSTTKLIEKGH</sequence>
<dbReference type="EC" id="2.7.1.167" evidence="1"/>
<dbReference type="EC" id="2.7.7.70" evidence="1"/>
<dbReference type="EMBL" id="CP000360">
    <property type="protein sequence ID" value="ABF42810.1"/>
    <property type="molecule type" value="Genomic_DNA"/>
</dbReference>
<dbReference type="RefSeq" id="WP_011524609.1">
    <property type="nucleotide sequence ID" value="NC_008009.1"/>
</dbReference>
<dbReference type="SMR" id="Q1IJZ0"/>
<dbReference type="STRING" id="204669.Acid345_3810"/>
<dbReference type="EnsemblBacteria" id="ABF42810">
    <property type="protein sequence ID" value="ABF42810"/>
    <property type="gene ID" value="Acid345_3810"/>
</dbReference>
<dbReference type="KEGG" id="aba:Acid345_3810"/>
<dbReference type="eggNOG" id="COG0615">
    <property type="taxonomic scope" value="Bacteria"/>
</dbReference>
<dbReference type="eggNOG" id="COG2870">
    <property type="taxonomic scope" value="Bacteria"/>
</dbReference>
<dbReference type="HOGENOM" id="CLU_021150_2_1_0"/>
<dbReference type="OrthoDB" id="9802794at2"/>
<dbReference type="UniPathway" id="UPA00356">
    <property type="reaction ID" value="UER00437"/>
</dbReference>
<dbReference type="UniPathway" id="UPA00356">
    <property type="reaction ID" value="UER00439"/>
</dbReference>
<dbReference type="Proteomes" id="UP000002432">
    <property type="component" value="Chromosome"/>
</dbReference>
<dbReference type="GO" id="GO:0005829">
    <property type="term" value="C:cytosol"/>
    <property type="evidence" value="ECO:0007669"/>
    <property type="project" value="TreeGrafter"/>
</dbReference>
<dbReference type="GO" id="GO:0005524">
    <property type="term" value="F:ATP binding"/>
    <property type="evidence" value="ECO:0007669"/>
    <property type="project" value="UniProtKB-UniRule"/>
</dbReference>
<dbReference type="GO" id="GO:0033785">
    <property type="term" value="F:heptose 7-phosphate kinase activity"/>
    <property type="evidence" value="ECO:0007669"/>
    <property type="project" value="UniProtKB-UniRule"/>
</dbReference>
<dbReference type="GO" id="GO:0033786">
    <property type="term" value="F:heptose-1-phosphate adenylyltransferase activity"/>
    <property type="evidence" value="ECO:0007669"/>
    <property type="project" value="UniProtKB-UniRule"/>
</dbReference>
<dbReference type="GO" id="GO:0016773">
    <property type="term" value="F:phosphotransferase activity, alcohol group as acceptor"/>
    <property type="evidence" value="ECO:0007669"/>
    <property type="project" value="InterPro"/>
</dbReference>
<dbReference type="GO" id="GO:0097171">
    <property type="term" value="P:ADP-L-glycero-beta-D-manno-heptose biosynthetic process"/>
    <property type="evidence" value="ECO:0007669"/>
    <property type="project" value="UniProtKB-UniPathway"/>
</dbReference>
<dbReference type="CDD" id="cd01172">
    <property type="entry name" value="RfaE_like"/>
    <property type="match status" value="1"/>
</dbReference>
<dbReference type="Gene3D" id="3.40.1190.20">
    <property type="match status" value="1"/>
</dbReference>
<dbReference type="Gene3D" id="3.40.50.620">
    <property type="entry name" value="HUPs"/>
    <property type="match status" value="1"/>
</dbReference>
<dbReference type="HAMAP" id="MF_01603">
    <property type="entry name" value="HldE"/>
    <property type="match status" value="1"/>
</dbReference>
<dbReference type="InterPro" id="IPR023030">
    <property type="entry name" value="Bifunc_HldE"/>
</dbReference>
<dbReference type="InterPro" id="IPR002173">
    <property type="entry name" value="Carboh/pur_kinase_PfkB_CS"/>
</dbReference>
<dbReference type="InterPro" id="IPR004821">
    <property type="entry name" value="Cyt_trans-like"/>
</dbReference>
<dbReference type="InterPro" id="IPR011611">
    <property type="entry name" value="PfkB_dom"/>
</dbReference>
<dbReference type="InterPro" id="IPR011913">
    <property type="entry name" value="RfaE_dom_I"/>
</dbReference>
<dbReference type="InterPro" id="IPR011914">
    <property type="entry name" value="RfaE_dom_II"/>
</dbReference>
<dbReference type="InterPro" id="IPR029056">
    <property type="entry name" value="Ribokinase-like"/>
</dbReference>
<dbReference type="InterPro" id="IPR014729">
    <property type="entry name" value="Rossmann-like_a/b/a_fold"/>
</dbReference>
<dbReference type="NCBIfam" id="TIGR00125">
    <property type="entry name" value="cyt_tran_rel"/>
    <property type="match status" value="1"/>
</dbReference>
<dbReference type="NCBIfam" id="NF008454">
    <property type="entry name" value="PRK11316.1"/>
    <property type="match status" value="1"/>
</dbReference>
<dbReference type="NCBIfam" id="TIGR02198">
    <property type="entry name" value="rfaE_dom_I"/>
    <property type="match status" value="1"/>
</dbReference>
<dbReference type="NCBIfam" id="TIGR02199">
    <property type="entry name" value="rfaE_dom_II"/>
    <property type="match status" value="1"/>
</dbReference>
<dbReference type="PANTHER" id="PTHR46969">
    <property type="entry name" value="BIFUNCTIONAL PROTEIN HLDE"/>
    <property type="match status" value="1"/>
</dbReference>
<dbReference type="PANTHER" id="PTHR46969:SF1">
    <property type="entry name" value="BIFUNCTIONAL PROTEIN HLDE"/>
    <property type="match status" value="1"/>
</dbReference>
<dbReference type="Pfam" id="PF01467">
    <property type="entry name" value="CTP_transf_like"/>
    <property type="match status" value="1"/>
</dbReference>
<dbReference type="Pfam" id="PF00294">
    <property type="entry name" value="PfkB"/>
    <property type="match status" value="1"/>
</dbReference>
<dbReference type="SUPFAM" id="SSF52374">
    <property type="entry name" value="Nucleotidylyl transferase"/>
    <property type="match status" value="1"/>
</dbReference>
<dbReference type="SUPFAM" id="SSF53613">
    <property type="entry name" value="Ribokinase-like"/>
    <property type="match status" value="1"/>
</dbReference>
<dbReference type="PROSITE" id="PS00583">
    <property type="entry name" value="PFKB_KINASES_1"/>
    <property type="match status" value="1"/>
</dbReference>
<reference key="1">
    <citation type="journal article" date="2009" name="Appl. Environ. Microbiol.">
        <title>Three genomes from the phylum Acidobacteria provide insight into the lifestyles of these microorganisms in soils.</title>
        <authorList>
            <person name="Ward N.L."/>
            <person name="Challacombe J.F."/>
            <person name="Janssen P.H."/>
            <person name="Henrissat B."/>
            <person name="Coutinho P.M."/>
            <person name="Wu M."/>
            <person name="Xie G."/>
            <person name="Haft D.H."/>
            <person name="Sait M."/>
            <person name="Badger J."/>
            <person name="Barabote R.D."/>
            <person name="Bradley B."/>
            <person name="Brettin T.S."/>
            <person name="Brinkac L.M."/>
            <person name="Bruce D."/>
            <person name="Creasy T."/>
            <person name="Daugherty S.C."/>
            <person name="Davidsen T.M."/>
            <person name="DeBoy R.T."/>
            <person name="Detter J.C."/>
            <person name="Dodson R.J."/>
            <person name="Durkin A.S."/>
            <person name="Ganapathy A."/>
            <person name="Gwinn-Giglio M."/>
            <person name="Han C.S."/>
            <person name="Khouri H."/>
            <person name="Kiss H."/>
            <person name="Kothari S.P."/>
            <person name="Madupu R."/>
            <person name="Nelson K.E."/>
            <person name="Nelson W.C."/>
            <person name="Paulsen I."/>
            <person name="Penn K."/>
            <person name="Ren Q."/>
            <person name="Rosovitz M.J."/>
            <person name="Selengut J.D."/>
            <person name="Shrivastava S."/>
            <person name="Sullivan S.A."/>
            <person name="Tapia R."/>
            <person name="Thompson L.S."/>
            <person name="Watkins K.L."/>
            <person name="Yang Q."/>
            <person name="Yu C."/>
            <person name="Zafar N."/>
            <person name="Zhou L."/>
            <person name="Kuske C.R."/>
        </authorList>
    </citation>
    <scope>NUCLEOTIDE SEQUENCE [LARGE SCALE GENOMIC DNA]</scope>
    <source>
        <strain>Ellin345</strain>
    </source>
</reference>
<name>HLDE_KORVE</name>
<accession>Q1IJZ0</accession>
<organism>
    <name type="scientific">Koribacter versatilis (strain Ellin345)</name>
    <dbReference type="NCBI Taxonomy" id="204669"/>
    <lineage>
        <taxon>Bacteria</taxon>
        <taxon>Pseudomonadati</taxon>
        <taxon>Acidobacteriota</taxon>
        <taxon>Terriglobia</taxon>
        <taxon>Terriglobales</taxon>
        <taxon>Candidatus Korobacteraceae</taxon>
        <taxon>Candidatus Korobacter</taxon>
    </lineage>
</organism>
<feature type="chain" id="PRO_0000255751" description="Bifunctional protein HldE">
    <location>
        <begin position="1"/>
        <end position="486"/>
    </location>
</feature>
<feature type="region of interest" description="Ribokinase">
    <location>
        <begin position="1"/>
        <end position="331"/>
    </location>
</feature>
<feature type="region of interest" description="Cytidylyltransferase">
    <location>
        <begin position="358"/>
        <end position="486"/>
    </location>
</feature>
<feature type="active site" evidence="1">
    <location>
        <position position="276"/>
    </location>
</feature>
<feature type="binding site" evidence="1">
    <location>
        <begin position="207"/>
        <end position="210"/>
    </location>
    <ligand>
        <name>ATP</name>
        <dbReference type="ChEBI" id="CHEBI:30616"/>
    </ligand>
</feature>